<gene>
    <name type="primary">Crp2</name>
    <name type="synonym">P22k15</name>
</gene>
<evidence type="ECO:0000250" key="1"/>
<evidence type="ECO:0000255" key="2"/>
<evidence type="ECO:0000305" key="3"/>
<comment type="tissue specificity">
    <text>Prostate.</text>
</comment>
<comment type="induction">
    <text>By androgens.</text>
</comment>
<comment type="similarity">
    <text evidence="3">Belongs to the cystatin family.</text>
</comment>
<dbReference type="EMBL" id="M58169">
    <property type="protein sequence ID" value="AAA63499.1"/>
    <property type="molecule type" value="mRNA"/>
</dbReference>
<dbReference type="EMBL" id="Z13994">
    <property type="protein sequence ID" value="CAA78385.1"/>
    <property type="molecule type" value="Genomic_DNA"/>
</dbReference>
<dbReference type="EMBL" id="BC100632">
    <property type="protein sequence ID" value="AAI00633.1"/>
    <property type="molecule type" value="mRNA"/>
</dbReference>
<dbReference type="PIR" id="JT0616">
    <property type="entry name" value="JT0616"/>
</dbReference>
<dbReference type="RefSeq" id="NP_954887.1">
    <property type="nucleotide sequence ID" value="NM_199266.2"/>
</dbReference>
<dbReference type="STRING" id="10116.ENSRNOP00000043921"/>
<dbReference type="GlyCosmos" id="P22283">
    <property type="glycosylation" value="1 site, No reported glycans"/>
</dbReference>
<dbReference type="GlyGen" id="P22283">
    <property type="glycosylation" value="1 site"/>
</dbReference>
<dbReference type="PaxDb" id="10116-ENSRNOP00000043921"/>
<dbReference type="Ensembl" id="ENSRNOT00000050369.6">
    <property type="protein sequence ID" value="ENSRNOP00000043921.6"/>
    <property type="gene ID" value="ENSRNOG00000030184.6"/>
</dbReference>
<dbReference type="GeneID" id="296229"/>
<dbReference type="KEGG" id="rno:296229"/>
<dbReference type="UCSC" id="RGD:727814">
    <property type="organism name" value="rat"/>
</dbReference>
<dbReference type="AGR" id="RGD:727814"/>
<dbReference type="CTD" id="296229"/>
<dbReference type="RGD" id="727814">
    <property type="gene designation" value="P22k15"/>
</dbReference>
<dbReference type="InParanoid" id="P22283"/>
<dbReference type="OrthoDB" id="10478280at2759"/>
<dbReference type="PhylomeDB" id="P22283"/>
<dbReference type="TreeFam" id="TF340321"/>
<dbReference type="PRO" id="PR:P22283"/>
<dbReference type="Proteomes" id="UP000002494">
    <property type="component" value="Chromosome 3"/>
</dbReference>
<dbReference type="GO" id="GO:0005737">
    <property type="term" value="C:cytoplasm"/>
    <property type="evidence" value="ECO:0000318"/>
    <property type="project" value="GO_Central"/>
</dbReference>
<dbReference type="GO" id="GO:0005615">
    <property type="term" value="C:extracellular space"/>
    <property type="evidence" value="ECO:0000318"/>
    <property type="project" value="GO_Central"/>
</dbReference>
<dbReference type="GO" id="GO:0031982">
    <property type="term" value="C:vesicle"/>
    <property type="evidence" value="ECO:0000318"/>
    <property type="project" value="GO_Central"/>
</dbReference>
<dbReference type="GO" id="GO:0004869">
    <property type="term" value="F:cysteine-type endopeptidase inhibitor activity"/>
    <property type="evidence" value="ECO:0000318"/>
    <property type="project" value="GO_Central"/>
</dbReference>
<dbReference type="CDD" id="cd00042">
    <property type="entry name" value="CY"/>
    <property type="match status" value="1"/>
</dbReference>
<dbReference type="InterPro" id="IPR000010">
    <property type="entry name" value="Cystatin_dom"/>
</dbReference>
<dbReference type="InterPro" id="IPR046350">
    <property type="entry name" value="Cystatin_sf"/>
</dbReference>
<dbReference type="PANTHER" id="PTHR46186">
    <property type="entry name" value="CYSTATIN"/>
    <property type="match status" value="1"/>
</dbReference>
<dbReference type="PANTHER" id="PTHR46186:SF4">
    <property type="entry name" value="CYSTATIN 10"/>
    <property type="match status" value="1"/>
</dbReference>
<dbReference type="SUPFAM" id="SSF54403">
    <property type="entry name" value="Cystatin/monellin"/>
    <property type="match status" value="1"/>
</dbReference>
<feature type="signal peptide" evidence="2">
    <location>
        <begin position="1"/>
        <end position="26"/>
    </location>
</feature>
<feature type="propeptide" id="PRO_0000006673" evidence="2">
    <location>
        <begin position="27"/>
        <end position="30"/>
    </location>
</feature>
<feature type="chain" id="PRO_0000006674" description="Cystatin-related protein 2">
    <location>
        <begin position="31"/>
        <end position="176"/>
    </location>
</feature>
<feature type="glycosylation site" description="N-linked (GlcNAc...) asparagine" evidence="3">
    <location>
        <position position="71"/>
    </location>
</feature>
<feature type="disulfide bond" evidence="1">
    <location>
        <begin position="129"/>
        <end position="139"/>
    </location>
</feature>
<feature type="disulfide bond" evidence="1">
    <location>
        <begin position="153"/>
        <end position="173"/>
    </location>
</feature>
<feature type="sequence conflict" description="In Ref. 4; CAA78385." evidence="3" ref="4">
    <original>KREICYFQLYPDYIEQNIRSVRFNCYTK</original>
    <variation>IERNMLLSTVS</variation>
    <location>
        <begin position="149"/>
        <end position="176"/>
    </location>
</feature>
<proteinExistence type="evidence at transcript level"/>
<organism>
    <name type="scientific">Rattus norvegicus</name>
    <name type="common">Rat</name>
    <dbReference type="NCBI Taxonomy" id="10116"/>
    <lineage>
        <taxon>Eukaryota</taxon>
        <taxon>Metazoa</taxon>
        <taxon>Chordata</taxon>
        <taxon>Craniata</taxon>
        <taxon>Vertebrata</taxon>
        <taxon>Euteleostomi</taxon>
        <taxon>Mammalia</taxon>
        <taxon>Eutheria</taxon>
        <taxon>Euarchontoglires</taxon>
        <taxon>Glires</taxon>
        <taxon>Rodentia</taxon>
        <taxon>Myomorpha</taxon>
        <taxon>Muroidea</taxon>
        <taxon>Muridae</taxon>
        <taxon>Murinae</taxon>
        <taxon>Rattus</taxon>
    </lineage>
</organism>
<protein>
    <recommendedName>
        <fullName>Cystatin-related protein 2</fullName>
    </recommendedName>
    <alternativeName>
        <fullName>Prostatic 22 kDa glycoprotein P22K15</fullName>
    </alternativeName>
</protein>
<keyword id="KW-1015">Disulfide bond</keyword>
<keyword id="KW-0325">Glycoprotein</keyword>
<keyword id="KW-0646">Protease inhibitor</keyword>
<keyword id="KW-1185">Reference proteome</keyword>
<keyword id="KW-0732">Signal</keyword>
<keyword id="KW-0789">Thiol protease inhibitor</keyword>
<accession>P22283</accession>
<accession>Q497B4</accession>
<name>22P2_RAT</name>
<reference key="1">
    <citation type="journal article" date="1990" name="Mol. Endocrinol.">
        <title>Tissue-specific expression and androgen regulation of different genes encoding rat prostatic 22-kilodalton glycoproteins homologous to human and rat cystatin.</title>
        <authorList>
            <person name="Winderickx J."/>
            <person name="Hemschoote K."/>
            <person name="de Clercq N."/>
            <person name="van Dijck P."/>
            <person name="Peeters B."/>
            <person name="Rombauts W."/>
            <person name="Verhoeven G."/>
            <person name="Heyns W."/>
        </authorList>
    </citation>
    <scope>NUCLEOTIDE SEQUENCE [MRNA]</scope>
    <source>
        <strain>Wistar</strain>
        <tissue>Prostate</tissue>
    </source>
</reference>
<reference key="2">
    <citation type="journal article" date="1992" name="Endocrinology">
        <title>An effect of androgens on the length of the poly(A)-tail and alternative splicing cause size heterogeneity of the messenger ribonucleic acids encoding cystatin-related protein.</title>
        <authorList>
            <person name="Vercaeren I."/>
            <person name="Winderickx J."/>
            <person name="Devos A."/>
            <person name="Peeters B."/>
            <person name="Heyns W."/>
        </authorList>
    </citation>
    <scope>NUCLEOTIDE SEQUENCE</scope>
    <source>
        <strain>Wistar</strain>
    </source>
</reference>
<reference key="3">
    <citation type="journal article" date="1993" name="Endocrinology">
        <authorList>
            <person name="Vercaeren I."/>
            <person name="Winderickx J."/>
            <person name="Devos A."/>
            <person name="Peeters B."/>
            <person name="Heyns W."/>
        </authorList>
    </citation>
    <scope>ERRATUM OF PUBMED:7679983</scope>
</reference>
<reference key="4">
    <citation type="journal article" date="1993" name="Gene">
        <title>Structure of rat genes encoding androgen-regulated cystatin-related proteins (CRPs): a new member of the cystatin superfamily.</title>
        <authorList>
            <person name="Devos A."/>
            <person name="de Clercq N."/>
            <person name="Vercaeren I."/>
            <person name="Heyns W."/>
            <person name="Rombauts W."/>
            <person name="Peeters B."/>
        </authorList>
    </citation>
    <scope>NUCLEOTIDE SEQUENCE [GENOMIC DNA]</scope>
</reference>
<reference key="5">
    <citation type="journal article" date="2004" name="Genome Res.">
        <title>The status, quality, and expansion of the NIH full-length cDNA project: the Mammalian Gene Collection (MGC).</title>
        <authorList>
            <consortium name="The MGC Project Team"/>
        </authorList>
    </citation>
    <scope>NUCLEOTIDE SEQUENCE [LARGE SCALE MRNA]</scope>
    <source>
        <tissue>Prostate</tissue>
    </source>
</reference>
<sequence length="176" mass="21013">MYKTLCGTQLLLAIFVLFLNFSHATAKGTRGPMEIFKKNFMEKNKLNDVYDIFKFLYNKFSHDTYLSNIKNQSFTMNTWGFGEIEVVKTKCRKIDSDFYKCSFQWEFCNIKRTPGVTIYYITLPGSVRCRKLLSKLVNCPFEEQTEQLKREICYFQLYPDYIEQNIRSVRFNCYTK</sequence>